<gene>
    <name evidence="1" type="primary">ubiA</name>
    <name type="ordered locus">lpl1381</name>
</gene>
<feature type="chain" id="PRO_0000262803" description="4-hydroxybenzoate octaprenyltransferase">
    <location>
        <begin position="1"/>
        <end position="282"/>
    </location>
</feature>
<feature type="transmembrane region" description="Helical" evidence="1">
    <location>
        <begin position="17"/>
        <end position="37"/>
    </location>
</feature>
<feature type="transmembrane region" description="Helical" evidence="1">
    <location>
        <begin position="40"/>
        <end position="60"/>
    </location>
</feature>
<feature type="transmembrane region" description="Helical" evidence="1">
    <location>
        <begin position="90"/>
        <end position="110"/>
    </location>
</feature>
<feature type="transmembrane region" description="Helical" evidence="1">
    <location>
        <begin position="113"/>
        <end position="133"/>
    </location>
</feature>
<feature type="transmembrane region" description="Helical" evidence="1">
    <location>
        <begin position="135"/>
        <end position="155"/>
    </location>
</feature>
<feature type="transmembrane region" description="Helical" evidence="1">
    <location>
        <begin position="163"/>
        <end position="183"/>
    </location>
</feature>
<feature type="transmembrane region" description="Helical" evidence="1">
    <location>
        <begin position="207"/>
        <end position="227"/>
    </location>
</feature>
<feature type="transmembrane region" description="Helical" evidence="1">
    <location>
        <begin position="231"/>
        <end position="251"/>
    </location>
</feature>
<feature type="transmembrane region" description="Helical" evidence="1">
    <location>
        <begin position="262"/>
        <end position="282"/>
    </location>
</feature>
<accession>Q5WWR8</accession>
<sequence>MIPWNAYVRLLRLNKPIGILLLWYPTAWALWMANQGFPSIDLLMIFLLGTVFMRSAGCVINDIADRHIDRHVARTQFRPLTSGEVSLSEAFILLFILLCASLFLLLKLPINCFYFAVISVLITFLYPFCKRFFNAPQLVLGLAFSMGIPMAFIASGKNLNSDFIVLFLINFSWIIAYDTMYAMTDKADDLKIGVKSTAIYFASYDRLIIALLLIFLHSLWLVWAINKNVECFFYLLWCTAAGILTYQLKLIYARIPKNCFKAFLVSGYYGLVMWFAVGLALI</sequence>
<reference key="1">
    <citation type="journal article" date="2004" name="Nat. Genet.">
        <title>Evidence in the Legionella pneumophila genome for exploitation of host cell functions and high genome plasticity.</title>
        <authorList>
            <person name="Cazalet C."/>
            <person name="Rusniok C."/>
            <person name="Brueggemann H."/>
            <person name="Zidane N."/>
            <person name="Magnier A."/>
            <person name="Ma L."/>
            <person name="Tichit M."/>
            <person name="Jarraud S."/>
            <person name="Bouchier C."/>
            <person name="Vandenesch F."/>
            <person name="Kunst F."/>
            <person name="Etienne J."/>
            <person name="Glaser P."/>
            <person name="Buchrieser C."/>
        </authorList>
    </citation>
    <scope>NUCLEOTIDE SEQUENCE [LARGE SCALE GENOMIC DNA]</scope>
    <source>
        <strain>Lens</strain>
    </source>
</reference>
<keyword id="KW-0997">Cell inner membrane</keyword>
<keyword id="KW-1003">Cell membrane</keyword>
<keyword id="KW-0460">Magnesium</keyword>
<keyword id="KW-0472">Membrane</keyword>
<keyword id="KW-0808">Transferase</keyword>
<keyword id="KW-0812">Transmembrane</keyword>
<keyword id="KW-1133">Transmembrane helix</keyword>
<keyword id="KW-0831">Ubiquinone biosynthesis</keyword>
<protein>
    <recommendedName>
        <fullName evidence="1">4-hydroxybenzoate octaprenyltransferase</fullName>
        <ecNumber evidence="1">2.5.1.39</ecNumber>
    </recommendedName>
    <alternativeName>
        <fullName evidence="1">4-HB polyprenyltransferase</fullName>
    </alternativeName>
</protein>
<dbReference type="EC" id="2.5.1.39" evidence="1"/>
<dbReference type="EMBL" id="CR628337">
    <property type="protein sequence ID" value="CAH15621.1"/>
    <property type="molecule type" value="Genomic_DNA"/>
</dbReference>
<dbReference type="RefSeq" id="WP_011215443.1">
    <property type="nucleotide sequence ID" value="NC_006369.1"/>
</dbReference>
<dbReference type="SMR" id="Q5WWR8"/>
<dbReference type="KEGG" id="lpf:lpl1381"/>
<dbReference type="LegioList" id="lpl1381"/>
<dbReference type="HOGENOM" id="CLU_034879_1_0_6"/>
<dbReference type="UniPathway" id="UPA00232"/>
<dbReference type="Proteomes" id="UP000002517">
    <property type="component" value="Chromosome"/>
</dbReference>
<dbReference type="GO" id="GO:0005886">
    <property type="term" value="C:plasma membrane"/>
    <property type="evidence" value="ECO:0007669"/>
    <property type="project" value="UniProtKB-SubCell"/>
</dbReference>
<dbReference type="GO" id="GO:0008412">
    <property type="term" value="F:4-hydroxybenzoate polyprenyltransferase activity"/>
    <property type="evidence" value="ECO:0007669"/>
    <property type="project" value="UniProtKB-UniRule"/>
</dbReference>
<dbReference type="GO" id="GO:0006744">
    <property type="term" value="P:ubiquinone biosynthetic process"/>
    <property type="evidence" value="ECO:0007669"/>
    <property type="project" value="UniProtKB-UniRule"/>
</dbReference>
<dbReference type="CDD" id="cd13959">
    <property type="entry name" value="PT_UbiA_COQ2"/>
    <property type="match status" value="1"/>
</dbReference>
<dbReference type="FunFam" id="1.10.357.140:FF:000008">
    <property type="entry name" value="4-hydroxybenzoate octaprenyltransferase"/>
    <property type="match status" value="1"/>
</dbReference>
<dbReference type="FunFam" id="1.20.120.1780:FF:000001">
    <property type="entry name" value="4-hydroxybenzoate octaprenyltransferase"/>
    <property type="match status" value="1"/>
</dbReference>
<dbReference type="Gene3D" id="1.10.357.140">
    <property type="entry name" value="UbiA prenyltransferase"/>
    <property type="match status" value="1"/>
</dbReference>
<dbReference type="Gene3D" id="1.20.120.1780">
    <property type="entry name" value="UbiA prenyltransferase"/>
    <property type="match status" value="1"/>
</dbReference>
<dbReference type="HAMAP" id="MF_01635">
    <property type="entry name" value="UbiA"/>
    <property type="match status" value="1"/>
</dbReference>
<dbReference type="InterPro" id="IPR006370">
    <property type="entry name" value="HB_polyprenyltransferase-like"/>
</dbReference>
<dbReference type="InterPro" id="IPR039653">
    <property type="entry name" value="Prenyltransferase"/>
</dbReference>
<dbReference type="InterPro" id="IPR000537">
    <property type="entry name" value="UbiA_prenyltransferase"/>
</dbReference>
<dbReference type="InterPro" id="IPR030470">
    <property type="entry name" value="UbiA_prenylTrfase_CS"/>
</dbReference>
<dbReference type="InterPro" id="IPR044878">
    <property type="entry name" value="UbiA_sf"/>
</dbReference>
<dbReference type="NCBIfam" id="TIGR01474">
    <property type="entry name" value="ubiA_proteo"/>
    <property type="match status" value="1"/>
</dbReference>
<dbReference type="PANTHER" id="PTHR11048:SF28">
    <property type="entry name" value="4-HYDROXYBENZOATE POLYPRENYLTRANSFERASE, MITOCHONDRIAL"/>
    <property type="match status" value="1"/>
</dbReference>
<dbReference type="PANTHER" id="PTHR11048">
    <property type="entry name" value="PRENYLTRANSFERASES"/>
    <property type="match status" value="1"/>
</dbReference>
<dbReference type="Pfam" id="PF01040">
    <property type="entry name" value="UbiA"/>
    <property type="match status" value="1"/>
</dbReference>
<dbReference type="PROSITE" id="PS00943">
    <property type="entry name" value="UBIA"/>
    <property type="match status" value="1"/>
</dbReference>
<evidence type="ECO:0000255" key="1">
    <source>
        <dbReference type="HAMAP-Rule" id="MF_01635"/>
    </source>
</evidence>
<proteinExistence type="inferred from homology"/>
<comment type="function">
    <text evidence="1">Catalyzes the prenylation of para-hydroxybenzoate (PHB) with an all-trans polyprenyl group. Mediates the second step in the final reaction sequence of ubiquinone-8 (UQ-8) biosynthesis, which is the condensation of the polyisoprenoid side chain with PHB, generating the first membrane-bound Q intermediate 3-octaprenyl-4-hydroxybenzoate.</text>
</comment>
<comment type="catalytic activity">
    <reaction evidence="1">
        <text>all-trans-octaprenyl diphosphate + 4-hydroxybenzoate = 4-hydroxy-3-(all-trans-octaprenyl)benzoate + diphosphate</text>
        <dbReference type="Rhea" id="RHEA:27782"/>
        <dbReference type="ChEBI" id="CHEBI:1617"/>
        <dbReference type="ChEBI" id="CHEBI:17879"/>
        <dbReference type="ChEBI" id="CHEBI:33019"/>
        <dbReference type="ChEBI" id="CHEBI:57711"/>
        <dbReference type="EC" id="2.5.1.39"/>
    </reaction>
</comment>
<comment type="cofactor">
    <cofactor evidence="1">
        <name>Mg(2+)</name>
        <dbReference type="ChEBI" id="CHEBI:18420"/>
    </cofactor>
</comment>
<comment type="pathway">
    <text evidence="1">Cofactor biosynthesis; ubiquinone biosynthesis.</text>
</comment>
<comment type="subcellular location">
    <subcellularLocation>
        <location evidence="1">Cell inner membrane</location>
        <topology evidence="1">Multi-pass membrane protein</topology>
    </subcellularLocation>
</comment>
<comment type="similarity">
    <text evidence="1">Belongs to the UbiA prenyltransferase family.</text>
</comment>
<name>UBIA_LEGPL</name>
<organism>
    <name type="scientific">Legionella pneumophila (strain Lens)</name>
    <dbReference type="NCBI Taxonomy" id="297245"/>
    <lineage>
        <taxon>Bacteria</taxon>
        <taxon>Pseudomonadati</taxon>
        <taxon>Pseudomonadota</taxon>
        <taxon>Gammaproteobacteria</taxon>
        <taxon>Legionellales</taxon>
        <taxon>Legionellaceae</taxon>
        <taxon>Legionella</taxon>
    </lineage>
</organism>